<gene>
    <name type="ORF">Bm1_20975</name>
</gene>
<keyword id="KW-0067">ATP-binding</keyword>
<keyword id="KW-0507">mRNA processing</keyword>
<keyword id="KW-0547">Nucleotide-binding</keyword>
<keyword id="KW-0539">Nucleus</keyword>
<keyword id="KW-1185">Reference proteome</keyword>
<evidence type="ECO:0000255" key="1">
    <source>
        <dbReference type="HAMAP-Rule" id="MF_03035"/>
    </source>
</evidence>
<reference key="1">
    <citation type="journal article" date="2007" name="Science">
        <title>Draft genome of the filarial nematode parasite Brugia malayi.</title>
        <authorList>
            <person name="Ghedin E."/>
            <person name="Wang S."/>
            <person name="Spiro D."/>
            <person name="Caler E."/>
            <person name="Zhao Q."/>
            <person name="Crabtree J."/>
            <person name="Allen J.E."/>
            <person name="Delcher A.L."/>
            <person name="Guiliano D.B."/>
            <person name="Miranda-Saavedra D."/>
            <person name="Angiuoli S.V."/>
            <person name="Creasy T."/>
            <person name="Amedeo P."/>
            <person name="Haas B."/>
            <person name="El-Sayed N.M."/>
            <person name="Wortman J.R."/>
            <person name="Feldblyum T."/>
            <person name="Tallon L."/>
            <person name="Schatz M."/>
            <person name="Shumway M."/>
            <person name="Koo H."/>
            <person name="Salzberg S.L."/>
            <person name="Schobel S."/>
            <person name="Pertea M."/>
            <person name="Pop M."/>
            <person name="White O."/>
            <person name="Barton G.J."/>
            <person name="Carlow C.K.S."/>
            <person name="Crawford M.J."/>
            <person name="Daub J."/>
            <person name="Dimmic M.W."/>
            <person name="Estes C.F."/>
            <person name="Foster J.M."/>
            <person name="Ganatra M."/>
            <person name="Gregory W.F."/>
            <person name="Johnson N.M."/>
            <person name="Jin J."/>
            <person name="Komuniecki R."/>
            <person name="Korf I."/>
            <person name="Kumar S."/>
            <person name="Laney S."/>
            <person name="Li B.-W."/>
            <person name="Li W."/>
            <person name="Lindblom T.H."/>
            <person name="Lustigman S."/>
            <person name="Ma D."/>
            <person name="Maina C.V."/>
            <person name="Martin D.M."/>
            <person name="McCarter J.P."/>
            <person name="McReynolds L."/>
            <person name="Mitreva M."/>
            <person name="Nutman T.B."/>
            <person name="Parkinson J."/>
            <person name="Peregrin-Alvarez J.M."/>
            <person name="Poole C."/>
            <person name="Ren Q."/>
            <person name="Saunders L."/>
            <person name="Sluder A.E."/>
            <person name="Smith K."/>
            <person name="Stanke M."/>
            <person name="Unnasch T.R."/>
            <person name="Ware J."/>
            <person name="Wei A.D."/>
            <person name="Weil G."/>
            <person name="Williams D.J."/>
            <person name="Zhang Y."/>
            <person name="Williams S.A."/>
            <person name="Fraser-Liggett C."/>
            <person name="Slatko B."/>
            <person name="Blaxter M.L."/>
            <person name="Scott A.L."/>
        </authorList>
    </citation>
    <scope>NUCLEOTIDE SEQUENCE [LARGE SCALE GENOMIC DNA]</scope>
</reference>
<name>CLP1_BRUMA</name>
<sequence>MESGKSPLEENLQEFTLKEDSELRFEVANGDVMLELVDGRAEVFGTELIQHKKYVFPAGSRVAVFTWKKAVVELVGKTESAYVAEQTPMIIYLNTHAALEQLREHAESVVMQQEQARGPSLMIVGPTDVGKTTVCRILCNYAVRVGRTPIFVDLDVGQGSISVPGTVGALYIEKTADVVEGFDKKAPLVYHFGNLSPGSNIPLYDLLVKQLAEAISKRRKSSQDATYGGVIINTCGWVKGEGYACLVNAAEEFEVDVVIVLDHERLYNELQRDLPSFVKILHQPKSGGVENRSKEVRISSRNAFVHKYFYGTRAMPLYPHTFELSFDEVQFCKIGCERLPIECLPFGMKVDDHRTKVVPIEPSEDLVHHLVSLSMCTAVDQSVLTTNVMGFIVITAVDMEREKLTVLSPQPYPLPSKILILSEVTFIDDKERT</sequence>
<accession>A8PB32</accession>
<organism>
    <name type="scientific">Brugia malayi</name>
    <name type="common">Filarial nematode worm</name>
    <dbReference type="NCBI Taxonomy" id="6279"/>
    <lineage>
        <taxon>Eukaryota</taxon>
        <taxon>Metazoa</taxon>
        <taxon>Ecdysozoa</taxon>
        <taxon>Nematoda</taxon>
        <taxon>Chromadorea</taxon>
        <taxon>Rhabditida</taxon>
        <taxon>Spirurina</taxon>
        <taxon>Spiruromorpha</taxon>
        <taxon>Filarioidea</taxon>
        <taxon>Onchocercidae</taxon>
        <taxon>Brugia</taxon>
    </lineage>
</organism>
<dbReference type="EMBL" id="DS238990">
    <property type="protein sequence ID" value="EDP35504.1"/>
    <property type="molecule type" value="Genomic_DNA"/>
</dbReference>
<dbReference type="SMR" id="A8PB32"/>
<dbReference type="FunCoup" id="A8PB32">
    <property type="interactions" value="1841"/>
</dbReference>
<dbReference type="STRING" id="6279.A8PB32"/>
<dbReference type="EnsemblMetazoa" id="Bm13976.1">
    <property type="protein sequence ID" value="Bm13976.1"/>
    <property type="gene ID" value="WBGene00234237"/>
</dbReference>
<dbReference type="GeneID" id="6099098"/>
<dbReference type="KEGG" id="bmy:BM_BM13976"/>
<dbReference type="CTD" id="6099098"/>
<dbReference type="WormBase" id="Bm13976">
    <property type="protein sequence ID" value="BM26318"/>
    <property type="gene ID" value="WBGene00234237"/>
    <property type="gene designation" value="Bma-clpf-1"/>
</dbReference>
<dbReference type="HOGENOM" id="CLU_018195_1_0_1"/>
<dbReference type="InParanoid" id="A8PB32"/>
<dbReference type="OMA" id="VQYVNCH"/>
<dbReference type="OrthoDB" id="258143at2759"/>
<dbReference type="Proteomes" id="UP000006672">
    <property type="component" value="Unassembled WGS sequence"/>
</dbReference>
<dbReference type="GO" id="GO:0005849">
    <property type="term" value="C:mRNA cleavage factor complex"/>
    <property type="evidence" value="ECO:0007669"/>
    <property type="project" value="InterPro"/>
</dbReference>
<dbReference type="GO" id="GO:0005524">
    <property type="term" value="F:ATP binding"/>
    <property type="evidence" value="ECO:0007669"/>
    <property type="project" value="UniProtKB-UniRule"/>
</dbReference>
<dbReference type="GO" id="GO:0051736">
    <property type="term" value="F:ATP-dependent polyribonucleotide 5'-hydroxyl-kinase activity"/>
    <property type="evidence" value="ECO:0007669"/>
    <property type="project" value="EnsemblMetazoa"/>
</dbReference>
<dbReference type="GO" id="GO:0031124">
    <property type="term" value="P:mRNA 3'-end processing"/>
    <property type="evidence" value="ECO:0007669"/>
    <property type="project" value="UniProtKB-UniRule"/>
</dbReference>
<dbReference type="GO" id="GO:0006388">
    <property type="term" value="P:tRNA splicing, via endonucleolytic cleavage and ligation"/>
    <property type="evidence" value="ECO:0007669"/>
    <property type="project" value="TreeGrafter"/>
</dbReference>
<dbReference type="FunFam" id="2.40.30.330:FF:000001">
    <property type="entry name" value="Protein CLP1 homolog"/>
    <property type="match status" value="1"/>
</dbReference>
<dbReference type="FunFam" id="3.40.50.300:FF:000454">
    <property type="entry name" value="Protein CLP1 homolog"/>
    <property type="match status" value="1"/>
</dbReference>
<dbReference type="FunFam" id="2.60.120.1030:FF:000001">
    <property type="entry name" value="Protein CLP1 homolog 5"/>
    <property type="match status" value="1"/>
</dbReference>
<dbReference type="Gene3D" id="2.60.120.1030">
    <property type="entry name" value="Clp1, DNA binding domain"/>
    <property type="match status" value="1"/>
</dbReference>
<dbReference type="Gene3D" id="3.40.50.300">
    <property type="entry name" value="P-loop containing nucleotide triphosphate hydrolases"/>
    <property type="match status" value="1"/>
</dbReference>
<dbReference type="Gene3D" id="2.40.30.330">
    <property type="entry name" value="Pre-mRNA cleavage complex subunit Clp1, C-terminal domain"/>
    <property type="match status" value="1"/>
</dbReference>
<dbReference type="HAMAP" id="MF_03035">
    <property type="entry name" value="Clp1"/>
    <property type="match status" value="1"/>
</dbReference>
<dbReference type="InterPro" id="IPR028606">
    <property type="entry name" value="Clp1"/>
</dbReference>
<dbReference type="InterPro" id="IPR045116">
    <property type="entry name" value="Clp1/Grc3"/>
</dbReference>
<dbReference type="InterPro" id="IPR010655">
    <property type="entry name" value="Clp1_C"/>
</dbReference>
<dbReference type="InterPro" id="IPR038238">
    <property type="entry name" value="Clp1_C_sf"/>
</dbReference>
<dbReference type="InterPro" id="IPR032324">
    <property type="entry name" value="Clp1_N"/>
</dbReference>
<dbReference type="InterPro" id="IPR038239">
    <property type="entry name" value="Clp1_N_sf"/>
</dbReference>
<dbReference type="InterPro" id="IPR032319">
    <property type="entry name" value="CLP1_P"/>
</dbReference>
<dbReference type="InterPro" id="IPR027417">
    <property type="entry name" value="P-loop_NTPase"/>
</dbReference>
<dbReference type="PANTHER" id="PTHR12755">
    <property type="entry name" value="CLEAVAGE/POLYADENYLATION FACTOR IA SUBUNIT CLP1P"/>
    <property type="match status" value="1"/>
</dbReference>
<dbReference type="PANTHER" id="PTHR12755:SF6">
    <property type="entry name" value="POLYRIBONUCLEOTIDE 5'-HYDROXYL-KINASE CLP1"/>
    <property type="match status" value="1"/>
</dbReference>
<dbReference type="Pfam" id="PF06807">
    <property type="entry name" value="Clp1"/>
    <property type="match status" value="1"/>
</dbReference>
<dbReference type="Pfam" id="PF16573">
    <property type="entry name" value="CLP1_N"/>
    <property type="match status" value="1"/>
</dbReference>
<dbReference type="Pfam" id="PF16575">
    <property type="entry name" value="CLP1_P"/>
    <property type="match status" value="1"/>
</dbReference>
<dbReference type="SUPFAM" id="SSF52540">
    <property type="entry name" value="P-loop containing nucleoside triphosphate hydrolases"/>
    <property type="match status" value="2"/>
</dbReference>
<proteinExistence type="inferred from homology"/>
<feature type="chain" id="PRO_0000375172" description="Protein CLP1 homolog">
    <location>
        <begin position="1"/>
        <end position="433"/>
    </location>
</feature>
<feature type="binding site" evidence="1">
    <location>
        <position position="22"/>
    </location>
    <ligand>
        <name>ATP</name>
        <dbReference type="ChEBI" id="CHEBI:30616"/>
    </ligand>
</feature>
<feature type="binding site" evidence="1">
    <location>
        <position position="61"/>
    </location>
    <ligand>
        <name>ATP</name>
        <dbReference type="ChEBI" id="CHEBI:30616"/>
    </ligand>
</feature>
<feature type="binding site" evidence="1">
    <location>
        <begin position="128"/>
        <end position="133"/>
    </location>
    <ligand>
        <name>ATP</name>
        <dbReference type="ChEBI" id="CHEBI:30616"/>
    </ligand>
</feature>
<comment type="function">
    <text evidence="1">Required for endonucleolytic cleavage during polyadenylation-dependent pre-mRNA 3'-end formation.</text>
</comment>
<comment type="subcellular location">
    <subcellularLocation>
        <location evidence="1">Nucleus</location>
    </subcellularLocation>
</comment>
<comment type="similarity">
    <text evidence="1">Belongs to the Clp1 family. Clp1 subfamily.</text>
</comment>
<protein>
    <recommendedName>
        <fullName evidence="1">Protein CLP1 homolog</fullName>
    </recommendedName>
</protein>